<reference key="1">
    <citation type="journal article" date="2003" name="Nat. Biotechnol.">
        <title>The genome sequence of the entomopathogenic bacterium Photorhabdus luminescens.</title>
        <authorList>
            <person name="Duchaud E."/>
            <person name="Rusniok C."/>
            <person name="Frangeul L."/>
            <person name="Buchrieser C."/>
            <person name="Givaudan A."/>
            <person name="Taourit S."/>
            <person name="Bocs S."/>
            <person name="Boursaux-Eude C."/>
            <person name="Chandler M."/>
            <person name="Charles J.-F."/>
            <person name="Dassa E."/>
            <person name="Derose R."/>
            <person name="Derzelle S."/>
            <person name="Freyssinet G."/>
            <person name="Gaudriault S."/>
            <person name="Medigue C."/>
            <person name="Lanois A."/>
            <person name="Powell K."/>
            <person name="Siguier P."/>
            <person name="Vincent R."/>
            <person name="Wingate V."/>
            <person name="Zouine M."/>
            <person name="Glaser P."/>
            <person name="Boemare N."/>
            <person name="Danchin A."/>
            <person name="Kunst F."/>
        </authorList>
    </citation>
    <scope>NUCLEOTIDE SEQUENCE [LARGE SCALE GENOMIC DNA]</scope>
    <source>
        <strain>DSM 15139 / CIP 105565 / TT01</strain>
    </source>
</reference>
<accession>Q7MYC2</accession>
<proteinExistence type="inferred from homology"/>
<feature type="initiator methionine" description="Removed" evidence="1">
    <location>
        <position position="1"/>
    </location>
</feature>
<feature type="chain" id="PRO_0000148130" description="ATP-dependent protease subunit HslV">
    <location>
        <begin position="2"/>
        <end position="176"/>
    </location>
</feature>
<feature type="active site" evidence="2">
    <location>
        <position position="2"/>
    </location>
</feature>
<feature type="binding site" evidence="2">
    <location>
        <position position="157"/>
    </location>
    <ligand>
        <name>Na(+)</name>
        <dbReference type="ChEBI" id="CHEBI:29101"/>
    </ligand>
</feature>
<feature type="binding site" evidence="2">
    <location>
        <position position="160"/>
    </location>
    <ligand>
        <name>Na(+)</name>
        <dbReference type="ChEBI" id="CHEBI:29101"/>
    </ligand>
</feature>
<feature type="binding site" evidence="2">
    <location>
        <position position="163"/>
    </location>
    <ligand>
        <name>Na(+)</name>
        <dbReference type="ChEBI" id="CHEBI:29101"/>
    </ligand>
</feature>
<protein>
    <recommendedName>
        <fullName evidence="2">ATP-dependent protease subunit HslV</fullName>
        <ecNumber evidence="2">3.4.25.2</ecNumber>
    </recommendedName>
</protein>
<dbReference type="EC" id="3.4.25.2" evidence="2"/>
<dbReference type="EMBL" id="BX571874">
    <property type="protein sequence ID" value="CAE17134.1"/>
    <property type="molecule type" value="Genomic_DNA"/>
</dbReference>
<dbReference type="RefSeq" id="WP_011148827.1">
    <property type="nucleotide sequence ID" value="NC_005126.1"/>
</dbReference>
<dbReference type="SMR" id="Q7MYC2"/>
<dbReference type="STRING" id="243265.plu4762"/>
<dbReference type="MEROPS" id="T01.006"/>
<dbReference type="GeneID" id="48850995"/>
<dbReference type="KEGG" id="plu:plu4762"/>
<dbReference type="eggNOG" id="COG5405">
    <property type="taxonomic scope" value="Bacteria"/>
</dbReference>
<dbReference type="HOGENOM" id="CLU_093872_1_0_6"/>
<dbReference type="OrthoDB" id="9804884at2"/>
<dbReference type="Proteomes" id="UP000002514">
    <property type="component" value="Chromosome"/>
</dbReference>
<dbReference type="GO" id="GO:0009376">
    <property type="term" value="C:HslUV protease complex"/>
    <property type="evidence" value="ECO:0007669"/>
    <property type="project" value="UniProtKB-UniRule"/>
</dbReference>
<dbReference type="GO" id="GO:0005839">
    <property type="term" value="C:proteasome core complex"/>
    <property type="evidence" value="ECO:0007669"/>
    <property type="project" value="InterPro"/>
</dbReference>
<dbReference type="GO" id="GO:0046872">
    <property type="term" value="F:metal ion binding"/>
    <property type="evidence" value="ECO:0007669"/>
    <property type="project" value="UniProtKB-KW"/>
</dbReference>
<dbReference type="GO" id="GO:0004298">
    <property type="term" value="F:threonine-type endopeptidase activity"/>
    <property type="evidence" value="ECO:0007669"/>
    <property type="project" value="UniProtKB-KW"/>
</dbReference>
<dbReference type="GO" id="GO:0051603">
    <property type="term" value="P:proteolysis involved in protein catabolic process"/>
    <property type="evidence" value="ECO:0007669"/>
    <property type="project" value="InterPro"/>
</dbReference>
<dbReference type="CDD" id="cd01913">
    <property type="entry name" value="protease_HslV"/>
    <property type="match status" value="1"/>
</dbReference>
<dbReference type="FunFam" id="3.60.20.10:FF:000002">
    <property type="entry name" value="ATP-dependent protease subunit HslV"/>
    <property type="match status" value="1"/>
</dbReference>
<dbReference type="Gene3D" id="3.60.20.10">
    <property type="entry name" value="Glutamine Phosphoribosylpyrophosphate, subunit 1, domain 1"/>
    <property type="match status" value="1"/>
</dbReference>
<dbReference type="HAMAP" id="MF_00248">
    <property type="entry name" value="HslV"/>
    <property type="match status" value="1"/>
</dbReference>
<dbReference type="InterPro" id="IPR022281">
    <property type="entry name" value="ATP-dep_Prtase_HsIV_su"/>
</dbReference>
<dbReference type="InterPro" id="IPR029055">
    <property type="entry name" value="Ntn_hydrolases_N"/>
</dbReference>
<dbReference type="InterPro" id="IPR001353">
    <property type="entry name" value="Proteasome_sua/b"/>
</dbReference>
<dbReference type="InterPro" id="IPR023333">
    <property type="entry name" value="Proteasome_suB-type"/>
</dbReference>
<dbReference type="NCBIfam" id="TIGR03692">
    <property type="entry name" value="ATP_dep_HslV"/>
    <property type="match status" value="1"/>
</dbReference>
<dbReference type="NCBIfam" id="NF003964">
    <property type="entry name" value="PRK05456.1"/>
    <property type="match status" value="1"/>
</dbReference>
<dbReference type="PANTHER" id="PTHR32194:SF0">
    <property type="entry name" value="ATP-DEPENDENT PROTEASE SUBUNIT HSLV"/>
    <property type="match status" value="1"/>
</dbReference>
<dbReference type="PANTHER" id="PTHR32194">
    <property type="entry name" value="METALLOPROTEASE TLDD"/>
    <property type="match status" value="1"/>
</dbReference>
<dbReference type="Pfam" id="PF00227">
    <property type="entry name" value="Proteasome"/>
    <property type="match status" value="1"/>
</dbReference>
<dbReference type="PIRSF" id="PIRSF039093">
    <property type="entry name" value="HslV"/>
    <property type="match status" value="1"/>
</dbReference>
<dbReference type="SUPFAM" id="SSF56235">
    <property type="entry name" value="N-terminal nucleophile aminohydrolases (Ntn hydrolases)"/>
    <property type="match status" value="1"/>
</dbReference>
<dbReference type="PROSITE" id="PS51476">
    <property type="entry name" value="PROTEASOME_BETA_2"/>
    <property type="match status" value="1"/>
</dbReference>
<evidence type="ECO:0000250" key="1"/>
<evidence type="ECO:0000255" key="2">
    <source>
        <dbReference type="HAMAP-Rule" id="MF_00248"/>
    </source>
</evidence>
<sequence length="176" mass="19082">MTTIVSVRRNGQVVIGGDGQATMGNTVMKGNVRKVRRLYNDKVIAGFAGGTADAFTLFELFERKLEMHQGHLTKAAVELAKDWRTDRMLRKLEALLAVADENTSLIITGNGDVIQPENDLIAIGSGGPFAQSAARAMLENTDLGARQIAEKALTIAGDICIYTNHNHNFEELPSKA</sequence>
<organism>
    <name type="scientific">Photorhabdus laumondii subsp. laumondii (strain DSM 15139 / CIP 105565 / TT01)</name>
    <name type="common">Photorhabdus luminescens subsp. laumondii</name>
    <dbReference type="NCBI Taxonomy" id="243265"/>
    <lineage>
        <taxon>Bacteria</taxon>
        <taxon>Pseudomonadati</taxon>
        <taxon>Pseudomonadota</taxon>
        <taxon>Gammaproteobacteria</taxon>
        <taxon>Enterobacterales</taxon>
        <taxon>Morganellaceae</taxon>
        <taxon>Photorhabdus</taxon>
    </lineage>
</organism>
<keyword id="KW-0021">Allosteric enzyme</keyword>
<keyword id="KW-0963">Cytoplasm</keyword>
<keyword id="KW-0378">Hydrolase</keyword>
<keyword id="KW-0479">Metal-binding</keyword>
<keyword id="KW-0645">Protease</keyword>
<keyword id="KW-1185">Reference proteome</keyword>
<keyword id="KW-0915">Sodium</keyword>
<keyword id="KW-0888">Threonine protease</keyword>
<comment type="function">
    <text evidence="2">Protease subunit of a proteasome-like degradation complex believed to be a general protein degrading machinery.</text>
</comment>
<comment type="catalytic activity">
    <reaction evidence="2">
        <text>ATP-dependent cleavage of peptide bonds with broad specificity.</text>
        <dbReference type="EC" id="3.4.25.2"/>
    </reaction>
</comment>
<comment type="activity regulation">
    <text evidence="2">Allosterically activated by HslU binding.</text>
</comment>
<comment type="subunit">
    <text evidence="2">A double ring-shaped homohexamer of HslV is capped on each side by a ring-shaped HslU homohexamer. The assembly of the HslU/HslV complex is dependent on binding of ATP.</text>
</comment>
<comment type="subcellular location">
    <subcellularLocation>
        <location evidence="2">Cytoplasm</location>
    </subcellularLocation>
</comment>
<comment type="similarity">
    <text evidence="2">Belongs to the peptidase T1B family. HslV subfamily.</text>
</comment>
<gene>
    <name evidence="2" type="primary">hslV</name>
    <name type="ordered locus">plu4762</name>
</gene>
<name>HSLV_PHOLL</name>